<dbReference type="EMBL" id="Z66512">
    <property type="protein sequence ID" value="CAA91323.1"/>
    <property type="molecule type" value="Genomic_DNA"/>
</dbReference>
<dbReference type="PIR" id="T22519">
    <property type="entry name" value="T22519"/>
</dbReference>
<dbReference type="RefSeq" id="NP_496172.1">
    <property type="nucleotide sequence ID" value="NM_063771.5"/>
</dbReference>
<dbReference type="SMR" id="Q20681"/>
<dbReference type="BioGRID" id="39886">
    <property type="interactions" value="3"/>
</dbReference>
<dbReference type="DIP" id="DIP-24661N"/>
<dbReference type="FunCoup" id="Q20681">
    <property type="interactions" value="10"/>
</dbReference>
<dbReference type="IntAct" id="Q20681">
    <property type="interactions" value="2"/>
</dbReference>
<dbReference type="STRING" id="6239.F52H3.3.1"/>
<dbReference type="PaxDb" id="6239-F52H3.3"/>
<dbReference type="PeptideAtlas" id="Q20681"/>
<dbReference type="EnsemblMetazoa" id="F52H3.3.1">
    <property type="protein sequence ID" value="F52H3.3.1"/>
    <property type="gene ID" value="WBGene00009945"/>
</dbReference>
<dbReference type="GeneID" id="174567"/>
<dbReference type="KEGG" id="cel:CELE_F52H3.3"/>
<dbReference type="UCSC" id="F52H3.3">
    <property type="organism name" value="c. elegans"/>
</dbReference>
<dbReference type="AGR" id="WB:WBGene00009945"/>
<dbReference type="CTD" id="174567"/>
<dbReference type="WormBase" id="F52H3.3">
    <property type="protein sequence ID" value="CE03399"/>
    <property type="gene ID" value="WBGene00009945"/>
    <property type="gene designation" value="bath-38"/>
</dbReference>
<dbReference type="eggNOG" id="ENOG502QSZD">
    <property type="taxonomic scope" value="Eukaryota"/>
</dbReference>
<dbReference type="GeneTree" id="ENSGT00970000196035"/>
<dbReference type="HOGENOM" id="CLU_051249_0_0_1"/>
<dbReference type="InParanoid" id="Q20681"/>
<dbReference type="OMA" id="NYNSNNW"/>
<dbReference type="OrthoDB" id="409824at2759"/>
<dbReference type="PhylomeDB" id="Q20681"/>
<dbReference type="SignaLink" id="Q20681"/>
<dbReference type="PRO" id="PR:Q20681"/>
<dbReference type="Proteomes" id="UP000001940">
    <property type="component" value="Chromosome II"/>
</dbReference>
<dbReference type="Bgee" id="WBGene00009945">
    <property type="expression patterns" value="Expressed in pharyngeal muscle cell (C elegans) and 3 other cell types or tissues"/>
</dbReference>
<dbReference type="CDD" id="cd18186">
    <property type="entry name" value="BTB_POZ_ZBTB_KLHL-like"/>
    <property type="match status" value="1"/>
</dbReference>
<dbReference type="Gene3D" id="2.60.210.10">
    <property type="entry name" value="Apoptosis, Tumor Necrosis Factor Receptor Associated Protein 2, Chain A"/>
    <property type="match status" value="1"/>
</dbReference>
<dbReference type="Gene3D" id="3.30.710.10">
    <property type="entry name" value="Potassium Channel Kv1.1, Chain A"/>
    <property type="match status" value="1"/>
</dbReference>
<dbReference type="InterPro" id="IPR000210">
    <property type="entry name" value="BTB/POZ_dom"/>
</dbReference>
<dbReference type="InterPro" id="IPR002083">
    <property type="entry name" value="MATH/TRAF_dom"/>
</dbReference>
<dbReference type="InterPro" id="IPR011333">
    <property type="entry name" value="SKP1/BTB/POZ_sf"/>
</dbReference>
<dbReference type="InterPro" id="IPR008974">
    <property type="entry name" value="TRAF-like"/>
</dbReference>
<dbReference type="PANTHER" id="PTHR47022">
    <property type="entry name" value="BTB AND MATH DOMAIN-CONTAINING PROTEIN 36-RELATED"/>
    <property type="match status" value="1"/>
</dbReference>
<dbReference type="PANTHER" id="PTHR47022:SF1">
    <property type="entry name" value="BTB AND MATH DOMAIN-CONTAINING PROTEIN 36-RELATED"/>
    <property type="match status" value="1"/>
</dbReference>
<dbReference type="Pfam" id="PF00651">
    <property type="entry name" value="BTB"/>
    <property type="match status" value="1"/>
</dbReference>
<dbReference type="Pfam" id="PF00917">
    <property type="entry name" value="MATH"/>
    <property type="match status" value="1"/>
</dbReference>
<dbReference type="SMART" id="SM00225">
    <property type="entry name" value="BTB"/>
    <property type="match status" value="1"/>
</dbReference>
<dbReference type="SMART" id="SM00061">
    <property type="entry name" value="MATH"/>
    <property type="match status" value="1"/>
</dbReference>
<dbReference type="SUPFAM" id="SSF54695">
    <property type="entry name" value="POZ domain"/>
    <property type="match status" value="1"/>
</dbReference>
<dbReference type="SUPFAM" id="SSF49599">
    <property type="entry name" value="TRAF domain-like"/>
    <property type="match status" value="1"/>
</dbReference>
<dbReference type="PROSITE" id="PS50097">
    <property type="entry name" value="BTB"/>
    <property type="match status" value="1"/>
</dbReference>
<dbReference type="PROSITE" id="PS50144">
    <property type="entry name" value="MATH"/>
    <property type="match status" value="1"/>
</dbReference>
<protein>
    <recommendedName>
        <fullName>BTB and MATH domain-containing protein 38</fullName>
    </recommendedName>
</protein>
<gene>
    <name type="primary">bath-38</name>
    <name type="ORF">F52H3.3</name>
</gene>
<organism>
    <name type="scientific">Caenorhabditis elegans</name>
    <dbReference type="NCBI Taxonomy" id="6239"/>
    <lineage>
        <taxon>Eukaryota</taxon>
        <taxon>Metazoa</taxon>
        <taxon>Ecdysozoa</taxon>
        <taxon>Nematoda</taxon>
        <taxon>Chromadorea</taxon>
        <taxon>Rhabditida</taxon>
        <taxon>Rhabditina</taxon>
        <taxon>Rhabditomorpha</taxon>
        <taxon>Rhabditoidea</taxon>
        <taxon>Rhabditidae</taxon>
        <taxon>Peloderinae</taxon>
        <taxon>Caenorhabditis</taxon>
    </lineage>
</organism>
<evidence type="ECO:0000255" key="1">
    <source>
        <dbReference type="PROSITE-ProRule" id="PRU00037"/>
    </source>
</evidence>
<evidence type="ECO:0000255" key="2">
    <source>
        <dbReference type="PROSITE-ProRule" id="PRU00129"/>
    </source>
</evidence>
<sequence>MSEQYTTPERENPDDERAFDRVFDALSISCPCDNPSNIPNRLFASPPTQSAPEQIDNGAADVQPFDFQAYNQPRLARTEGMLKLEIPNFSNLRSKVSTPFQYIGNLPWRLAAKTEKTKRTSDVKFFSVYIDCNPESESTLWSCDAVVEFRLVSRNRTIPPFSRQFTNKFNYNSNNWGFPSFMAWEDVNNSNYVRNEMVTVTARVVVQKVLGVRNVPKYDFGAMQTNICDMTLVINKQKLFVNKAYLALYSPVFYAMFFSNFQEREKTQVELEDVVLEEFRELLHVIYPCHKPITSDNVEYLLELGDKYEIQYVMDECERFLVGSEDILQITKLMWADQYLLAKLQDSCLRNIKEVSDVKAIKLTEEFKNLSDATKAALLEKVLKIVN</sequence>
<reference key="1">
    <citation type="journal article" date="1998" name="Science">
        <title>Genome sequence of the nematode C. elegans: a platform for investigating biology.</title>
        <authorList>
            <consortium name="The C. elegans sequencing consortium"/>
        </authorList>
    </citation>
    <scope>NUCLEOTIDE SEQUENCE [LARGE SCALE GENOMIC DNA]</scope>
    <source>
        <strain>Bristol N2</strain>
    </source>
</reference>
<feature type="chain" id="PRO_0000246699" description="BTB and MATH domain-containing protein 38">
    <location>
        <begin position="1"/>
        <end position="387"/>
    </location>
</feature>
<feature type="domain" description="MATH" evidence="2">
    <location>
        <begin position="79"/>
        <end position="204"/>
    </location>
</feature>
<feature type="domain" description="BTB" evidence="1">
    <location>
        <begin position="228"/>
        <end position="295"/>
    </location>
</feature>
<proteinExistence type="predicted"/>
<name>BAT38_CAEEL</name>
<keyword id="KW-1185">Reference proteome</keyword>
<accession>Q20681</accession>